<accession>G4N891</accession>
<keyword id="KW-1185">Reference proteome</keyword>
<keyword id="KW-0677">Repeat</keyword>
<keyword id="KW-0732">Signal</keyword>
<keyword id="KW-0843">Virulence</keyword>
<reference key="1">
    <citation type="journal article" date="2005" name="Nature">
        <title>The genome sequence of the rice blast fungus Magnaporthe grisea.</title>
        <authorList>
            <person name="Dean R.A."/>
            <person name="Talbot N.J."/>
            <person name="Ebbole D.J."/>
            <person name="Farman M.L."/>
            <person name="Mitchell T.K."/>
            <person name="Orbach M.J."/>
            <person name="Thon M.R."/>
            <person name="Kulkarni R."/>
            <person name="Xu J.-R."/>
            <person name="Pan H."/>
            <person name="Read N.D."/>
            <person name="Lee Y.-H."/>
            <person name="Carbone I."/>
            <person name="Brown D."/>
            <person name="Oh Y.Y."/>
            <person name="Donofrio N."/>
            <person name="Jeong J.S."/>
            <person name="Soanes D.M."/>
            <person name="Djonovic S."/>
            <person name="Kolomiets E."/>
            <person name="Rehmeyer C."/>
            <person name="Li W."/>
            <person name="Harding M."/>
            <person name="Kim S."/>
            <person name="Lebrun M.-H."/>
            <person name="Bohnert H."/>
            <person name="Coughlan S."/>
            <person name="Butler J."/>
            <person name="Calvo S.E."/>
            <person name="Ma L.-J."/>
            <person name="Nicol R."/>
            <person name="Purcell S."/>
            <person name="Nusbaum C."/>
            <person name="Galagan J.E."/>
            <person name="Birren B.W."/>
        </authorList>
    </citation>
    <scope>NUCLEOTIDE SEQUENCE [LARGE SCALE GENOMIC DNA]</scope>
    <source>
        <strain>70-15 / ATCC MYA-4617 / FGSC 8958</strain>
    </source>
</reference>
<reference key="2">
    <citation type="journal article" date="2012" name="Plant Cell">
        <title>Effector-mediated suppression of chitin-triggered immunity by magnaporthe oryzae is necessary for rice blast disease.</title>
        <authorList>
            <person name="Mentlak T.A."/>
            <person name="Kombrink A."/>
            <person name="Shinya T."/>
            <person name="Ryder L.S."/>
            <person name="Otomo I."/>
            <person name="Saitoh H."/>
            <person name="Terauchi R."/>
            <person name="Nishizawa Y."/>
            <person name="Shibuya N."/>
            <person name="Thomma B.P."/>
            <person name="Talbot N.J."/>
        </authorList>
    </citation>
    <scope>FUNCTION</scope>
    <scope>INDUCTION</scope>
    <scope>DISRUPTION PHENOTYPE</scope>
    <scope>DOMAIN</scope>
</reference>
<protein>
    <recommendedName>
        <fullName evidence="5">Secreted LysM effector slp2</fullName>
    </recommendedName>
    <alternativeName>
        <fullName evidence="5">LysM domain-containing protein 2</fullName>
    </alternativeName>
    <alternativeName>
        <fullName evidence="5">Secreted LysM protein 2</fullName>
    </alternativeName>
</protein>
<comment type="function">
    <text evidence="7">Might have a role in sequestration of chitin oligosaccharides (breakdown products of fungal cell walls that are released during invasion and act as triggers of host immunity) to dampen host defense.</text>
</comment>
<comment type="induction">
    <text evidence="4">Expression does not seem to be up-regulated during plant infection.</text>
</comment>
<comment type="domain">
    <text evidence="4">The LysM (lysin motif) domains are small globular domains involved in binding chitin in eukaryotes. Slp2 contains 2 LysM domains.</text>
</comment>
<comment type="disruption phenotype">
    <text evidence="4">Does not affect the virulence and the proliferation of the fungus in plant tissue.</text>
</comment>
<comment type="miscellaneous">
    <text evidence="6">In plants, chitin acts as a microbe-associated molecular pattern (MAMP) that is recognized by lysin motif (LysM)-containing plant cell surface-localized pattern recognition receptors (PRRs) that activate a plethora of downstream immune responses.</text>
</comment>
<comment type="similarity">
    <text evidence="6">Belongs to the secreted LysM effector family.</text>
</comment>
<organism>
    <name type="scientific">Pyricularia oryzae (strain 70-15 / ATCC MYA-4617 / FGSC 8958)</name>
    <name type="common">Rice blast fungus</name>
    <name type="synonym">Magnaporthe oryzae</name>
    <dbReference type="NCBI Taxonomy" id="242507"/>
    <lineage>
        <taxon>Eukaryota</taxon>
        <taxon>Fungi</taxon>
        <taxon>Dikarya</taxon>
        <taxon>Ascomycota</taxon>
        <taxon>Pezizomycotina</taxon>
        <taxon>Sordariomycetes</taxon>
        <taxon>Sordariomycetidae</taxon>
        <taxon>Magnaporthales</taxon>
        <taxon>Pyriculariaceae</taxon>
        <taxon>Pyricularia</taxon>
    </lineage>
</organism>
<feature type="signal peptide" evidence="1">
    <location>
        <begin position="1"/>
        <end position="16"/>
    </location>
</feature>
<feature type="chain" id="PRO_5003466693" description="Secreted LysM effector slp2" evidence="1">
    <location>
        <begin position="17"/>
        <end position="285"/>
    </location>
</feature>
<feature type="domain" description="LysM 1" evidence="2">
    <location>
        <begin position="157"/>
        <end position="201"/>
    </location>
</feature>
<feature type="domain" description="LysM 2" evidence="2">
    <location>
        <begin position="237"/>
        <end position="281"/>
    </location>
</feature>
<feature type="region of interest" description="Disordered" evidence="3">
    <location>
        <begin position="75"/>
        <end position="143"/>
    </location>
</feature>
<feature type="compositionally biased region" description="Basic and acidic residues" evidence="3">
    <location>
        <begin position="85"/>
        <end position="116"/>
    </location>
</feature>
<feature type="compositionally biased region" description="Gly residues" evidence="3">
    <location>
        <begin position="117"/>
        <end position="139"/>
    </location>
</feature>
<gene>
    <name evidence="5" type="primary">slp2</name>
    <name evidence="8" type="ORF">MGG_03468</name>
</gene>
<name>LYSM2_PYRO7</name>
<proteinExistence type="evidence at transcript level"/>
<evidence type="ECO:0000255" key="1"/>
<evidence type="ECO:0000255" key="2">
    <source>
        <dbReference type="PROSITE-ProRule" id="PRU01118"/>
    </source>
</evidence>
<evidence type="ECO:0000256" key="3">
    <source>
        <dbReference type="SAM" id="MobiDB-lite"/>
    </source>
</evidence>
<evidence type="ECO:0000269" key="4">
    <source>
    </source>
</evidence>
<evidence type="ECO:0000303" key="5">
    <source>
    </source>
</evidence>
<evidence type="ECO:0000305" key="6"/>
<evidence type="ECO:0000305" key="7">
    <source>
    </source>
</evidence>
<evidence type="ECO:0000312" key="8">
    <source>
        <dbReference type="EMBL" id="EHA50138.1"/>
    </source>
</evidence>
<sequence>MLPITVVTLFAALAAAAPASVSMEKRRVEGELVVRADAAPPAVLTELSSPVASAPAAEASKAGDAAKAGDAAKAGDAAKAGDAAKGGDAKGGDAKGGDAKGGDAKGGKGGDAKGGKGGDAAKGGKGGDAAKGGKGGDAAKGGNVRGCADLKTNGPVVEHKVVQGDTLGKLTATFQSGICNIAKENNIADPDKIDVGQVLKIPTGLCTQNVDNNSCIKAAVVNPNTDEKGTCLKTGPFTRVIKKGDSFVGIAKELGLQEQAVVDVNPGVDRFNLLPEQTINLPKCK</sequence>
<dbReference type="EMBL" id="CM001234">
    <property type="protein sequence ID" value="EHA50138.1"/>
    <property type="molecule type" value="Genomic_DNA"/>
</dbReference>
<dbReference type="RefSeq" id="XP_003716457.1">
    <property type="nucleotide sequence ID" value="XM_003716409.1"/>
</dbReference>
<dbReference type="SMR" id="G4N891"/>
<dbReference type="STRING" id="242507.G4N891"/>
<dbReference type="EnsemblFungi" id="MGG_03468T0">
    <property type="protein sequence ID" value="MGG_03468T0"/>
    <property type="gene ID" value="MGG_03468"/>
</dbReference>
<dbReference type="GeneID" id="2676810"/>
<dbReference type="KEGG" id="mgr:MGG_03468"/>
<dbReference type="VEuPathDB" id="FungiDB:MGG_03468"/>
<dbReference type="eggNOG" id="ENOG502REU8">
    <property type="taxonomic scope" value="Eukaryota"/>
</dbReference>
<dbReference type="HOGENOM" id="CLU_976855_0_0_1"/>
<dbReference type="InParanoid" id="G4N891"/>
<dbReference type="OMA" id="PTGLCTQ"/>
<dbReference type="OrthoDB" id="2107166at2759"/>
<dbReference type="Proteomes" id="UP000009058">
    <property type="component" value="Chromosome 4"/>
</dbReference>
<dbReference type="CDD" id="cd00118">
    <property type="entry name" value="LysM"/>
    <property type="match status" value="2"/>
</dbReference>
<dbReference type="Gene3D" id="3.10.350.10">
    <property type="entry name" value="LysM domain"/>
    <property type="match status" value="2"/>
</dbReference>
<dbReference type="InterPro" id="IPR018392">
    <property type="entry name" value="LysM_dom"/>
</dbReference>
<dbReference type="InterPro" id="IPR036779">
    <property type="entry name" value="LysM_dom_sf"/>
</dbReference>
<dbReference type="PANTHER" id="PTHR33734">
    <property type="entry name" value="LYSM DOMAIN-CONTAINING GPI-ANCHORED PROTEIN 2"/>
    <property type="match status" value="1"/>
</dbReference>
<dbReference type="PANTHER" id="PTHR33734:SF22">
    <property type="entry name" value="MEMBRANE-BOUND LYTIC MUREIN TRANSGLYCOSYLASE D"/>
    <property type="match status" value="1"/>
</dbReference>
<dbReference type="Pfam" id="PF01476">
    <property type="entry name" value="LysM"/>
    <property type="match status" value="2"/>
</dbReference>
<dbReference type="SMART" id="SM00257">
    <property type="entry name" value="LysM"/>
    <property type="match status" value="2"/>
</dbReference>
<dbReference type="SUPFAM" id="SSF54106">
    <property type="entry name" value="LysM domain"/>
    <property type="match status" value="1"/>
</dbReference>
<dbReference type="PROSITE" id="PS51782">
    <property type="entry name" value="LYSM"/>
    <property type="match status" value="2"/>
</dbReference>